<feature type="chain" id="PRO_0000360885" description="Tryptophan 2,3-dioxygenase">
    <location>
        <begin position="1"/>
        <end position="389"/>
    </location>
</feature>
<feature type="binding site" evidence="1">
    <location>
        <begin position="60"/>
        <end position="64"/>
    </location>
    <ligand>
        <name>substrate</name>
    </ligand>
</feature>
<feature type="binding site" evidence="1">
    <location>
        <position position="131"/>
    </location>
    <ligand>
        <name>substrate</name>
    </ligand>
</feature>
<feature type="binding site" description="axial binding residue" evidence="1">
    <location>
        <position position="316"/>
    </location>
    <ligand>
        <name>heme</name>
        <dbReference type="ChEBI" id="CHEBI:30413"/>
    </ligand>
    <ligandPart>
        <name>Fe</name>
        <dbReference type="ChEBI" id="CHEBI:18248"/>
    </ligandPart>
</feature>
<feature type="binding site" evidence="1">
    <location>
        <position position="331"/>
    </location>
    <ligand>
        <name>substrate</name>
    </ligand>
</feature>
<sequence>MACPYRSSAYTNGDHAQKGEVLGSEMGMLYGEYLMLNQIINSQRMQSVVSNRPVHDEHLFIITHQAYELWFKQIIYELDSIRDLFNTITVDESRTLDILKRLNRIVMILKLLVDHIPILETMTPLDFMDFRGYLSPASGFQSLQFRLLENKLGVKQEHRVKYNQKYQDVFGDDAKSLDMLTASEDEPSLCDLVQKWLERTPGLEESGFNFYQKFRSNVYELLDREEQKAKMQPLEHIRNYQLMDIKKRRDVYHTIFNEDAHEALVSRGERKFSYKAMQGAILITLYRDEPRFSQPHQLLNCLMDIDSFMTKWRYNHVMMVQRMIGSQQLGTGGSSGYQYLRSTLSDRYKVSLDLFNLSTFLIPRSNIPPLTEEMSNQLNTNTRTIKPTN</sequence>
<accession>Q2LD53</accession>
<evidence type="ECO:0000255" key="1">
    <source>
        <dbReference type="HAMAP-Rule" id="MF_03020"/>
    </source>
</evidence>
<protein>
    <recommendedName>
        <fullName evidence="1">Tryptophan 2,3-dioxygenase</fullName>
        <shortName evidence="1">TDO</shortName>
        <ecNumber evidence="1">1.13.11.11</ecNumber>
    </recommendedName>
    <alternativeName>
        <fullName evidence="1">Tryptamin 2,3-dioxygenase</fullName>
    </alternativeName>
    <alternativeName>
        <fullName evidence="1">Tryptophan oxygenase</fullName>
        <shortName evidence="1">TO</shortName>
        <shortName evidence="1">TRPO</shortName>
    </alternativeName>
    <alternativeName>
        <fullName evidence="1">Tryptophan pyrrolase</fullName>
    </alternativeName>
    <alternativeName>
        <fullName evidence="1">Tryptophanase</fullName>
    </alternativeName>
</protein>
<comment type="function">
    <text evidence="1">Heme-dependent dioxygenase that catalyzes the oxidative cleavage of the L-tryptophan (L-Trp) pyrrole ring and converts L-tryptophan to N-formyl-L-kynurenine. Catalyzes the oxidative cleavage of the indole moiety.</text>
</comment>
<comment type="catalytic activity">
    <reaction evidence="1">
        <text>L-tryptophan + O2 = N-formyl-L-kynurenine</text>
        <dbReference type="Rhea" id="RHEA:24536"/>
        <dbReference type="ChEBI" id="CHEBI:15379"/>
        <dbReference type="ChEBI" id="CHEBI:57912"/>
        <dbReference type="ChEBI" id="CHEBI:58629"/>
        <dbReference type="EC" id="1.13.11.11"/>
    </reaction>
</comment>
<comment type="cofactor">
    <cofactor evidence="1">
        <name>heme</name>
        <dbReference type="ChEBI" id="CHEBI:30413"/>
    </cofactor>
    <text evidence="1">Binds 1 heme group per subunit.</text>
</comment>
<comment type="pathway">
    <text evidence="1">Amino-acid degradation; L-tryptophan degradation via kynurenine pathway; L-kynurenine from L-tryptophan: step 1/2.</text>
</comment>
<comment type="pathway">
    <text evidence="1">Pigment biosynthesis; ommochrome biosynthesis.</text>
</comment>
<comment type="subunit">
    <text evidence="1">Homotetramer. Dimer of dimers.</text>
</comment>
<comment type="similarity">
    <text evidence="1">Belongs to the tryptophan 2,3-dioxygenase family.</text>
</comment>
<organism>
    <name type="scientific">Mayetiola destructor</name>
    <name type="common">Hessian fly</name>
    <dbReference type="NCBI Taxonomy" id="39758"/>
    <lineage>
        <taxon>Eukaryota</taxon>
        <taxon>Metazoa</taxon>
        <taxon>Ecdysozoa</taxon>
        <taxon>Arthropoda</taxon>
        <taxon>Hexapoda</taxon>
        <taxon>Insecta</taxon>
        <taxon>Pterygota</taxon>
        <taxon>Neoptera</taxon>
        <taxon>Endopterygota</taxon>
        <taxon>Diptera</taxon>
        <taxon>Nematocera</taxon>
        <taxon>Sciaroidea</taxon>
        <taxon>Cecidomyiidae</taxon>
        <taxon>Mayetiola</taxon>
    </lineage>
</organism>
<dbReference type="EC" id="1.13.11.11" evidence="1"/>
<dbReference type="EMBL" id="DQ335251">
    <property type="protein sequence ID" value="ABC69733.1"/>
    <property type="molecule type" value="Genomic_DNA"/>
</dbReference>
<dbReference type="SMR" id="Q2LD53"/>
<dbReference type="UniPathway" id="UPA00271"/>
<dbReference type="UniPathway" id="UPA00333">
    <property type="reaction ID" value="UER00453"/>
</dbReference>
<dbReference type="GO" id="GO:0020037">
    <property type="term" value="F:heme binding"/>
    <property type="evidence" value="ECO:0007669"/>
    <property type="project" value="UniProtKB-UniRule"/>
</dbReference>
<dbReference type="GO" id="GO:0046872">
    <property type="term" value="F:metal ion binding"/>
    <property type="evidence" value="ECO:0007669"/>
    <property type="project" value="UniProtKB-KW"/>
</dbReference>
<dbReference type="GO" id="GO:0004833">
    <property type="term" value="F:tryptophan 2,3-dioxygenase activity"/>
    <property type="evidence" value="ECO:0007669"/>
    <property type="project" value="UniProtKB-UniRule"/>
</dbReference>
<dbReference type="GO" id="GO:0019442">
    <property type="term" value="P:L-tryptophan catabolic process to acetyl-CoA"/>
    <property type="evidence" value="ECO:0007669"/>
    <property type="project" value="TreeGrafter"/>
</dbReference>
<dbReference type="GO" id="GO:0019441">
    <property type="term" value="P:L-tryptophan catabolic process to kynurenine"/>
    <property type="evidence" value="ECO:0007669"/>
    <property type="project" value="UniProtKB-UniRule"/>
</dbReference>
<dbReference type="GO" id="GO:0006727">
    <property type="term" value="P:ommochrome biosynthetic process"/>
    <property type="evidence" value="ECO:0007669"/>
    <property type="project" value="UniProtKB-UniRule"/>
</dbReference>
<dbReference type="Gene3D" id="1.10.287.3810">
    <property type="match status" value="1"/>
</dbReference>
<dbReference type="Gene3D" id="1.20.58.480">
    <property type="match status" value="1"/>
</dbReference>
<dbReference type="HAMAP" id="MF_01972">
    <property type="entry name" value="T23O"/>
    <property type="match status" value="1"/>
</dbReference>
<dbReference type="InterPro" id="IPR037217">
    <property type="entry name" value="Trp/Indoleamine_2_3_dOase-like"/>
</dbReference>
<dbReference type="InterPro" id="IPR004981">
    <property type="entry name" value="Trp_2_3_dOase"/>
</dbReference>
<dbReference type="PANTHER" id="PTHR10138">
    <property type="entry name" value="TRYPTOPHAN 2,3-DIOXYGENASE"/>
    <property type="match status" value="1"/>
</dbReference>
<dbReference type="PANTHER" id="PTHR10138:SF0">
    <property type="entry name" value="TRYPTOPHAN 2,3-DIOXYGENASE"/>
    <property type="match status" value="1"/>
</dbReference>
<dbReference type="Pfam" id="PF03301">
    <property type="entry name" value="Trp_dioxygenase"/>
    <property type="match status" value="1"/>
</dbReference>
<dbReference type="SUPFAM" id="SSF140959">
    <property type="entry name" value="Indolic compounds 2,3-dioxygenase-like"/>
    <property type="match status" value="1"/>
</dbReference>
<name>T23O_MAYDE</name>
<proteinExistence type="inferred from homology"/>
<keyword id="KW-0223">Dioxygenase</keyword>
<keyword id="KW-0349">Heme</keyword>
<keyword id="KW-0408">Iron</keyword>
<keyword id="KW-0479">Metal-binding</keyword>
<keyword id="KW-0560">Oxidoreductase</keyword>
<keyword id="KW-0823">Tryptophan catabolism</keyword>
<reference key="1">
    <citation type="submission" date="2005-12" db="EMBL/GenBank/DDBJ databases">
        <title>Cloning and characterization of white and vermilion eye-color genes from Hessian fly, Mayetiola destructor.</title>
        <authorList>
            <person name="Yoshiyama M."/>
            <person name="Morton P.K."/>
            <person name="Shukle R.H."/>
        </authorList>
    </citation>
    <scope>NUCLEOTIDE SEQUENCE [GENOMIC DNA]</scope>
</reference>